<organism>
    <name type="scientific">Penicillium rubens (strain ATCC 28089 / DSM 1075 / NRRL 1951 / Wisconsin 54-1255)</name>
    <name type="common">Penicillium chrysogenum</name>
    <dbReference type="NCBI Taxonomy" id="500485"/>
    <lineage>
        <taxon>Eukaryota</taxon>
        <taxon>Fungi</taxon>
        <taxon>Dikarya</taxon>
        <taxon>Ascomycota</taxon>
        <taxon>Pezizomycotina</taxon>
        <taxon>Eurotiomycetes</taxon>
        <taxon>Eurotiomycetidae</taxon>
        <taxon>Eurotiales</taxon>
        <taxon>Aspergillaceae</taxon>
        <taxon>Penicillium</taxon>
        <taxon>Penicillium chrysogenum species complex</taxon>
    </lineage>
</organism>
<name>ROQD_PENRW</name>
<accession>B6HJU1</accession>
<feature type="chain" id="PRO_0000436345" description="Roquefortine prenyltransferase roqD">
    <location>
        <begin position="1"/>
        <end position="422"/>
    </location>
</feature>
<feature type="binding site" evidence="1">
    <location>
        <position position="100"/>
    </location>
    <ligand>
        <name>substrate</name>
    </ligand>
</feature>
<feature type="binding site" evidence="1">
    <location>
        <position position="113"/>
    </location>
    <ligand>
        <name>dimethylallyl diphosphate</name>
        <dbReference type="ChEBI" id="CHEBI:57623"/>
    </ligand>
</feature>
<feature type="binding site" evidence="1">
    <location>
        <position position="200"/>
    </location>
    <ligand>
        <name>dimethylallyl diphosphate</name>
        <dbReference type="ChEBI" id="CHEBI:57623"/>
    </ligand>
</feature>
<feature type="binding site" evidence="1">
    <location>
        <position position="202"/>
    </location>
    <ligand>
        <name>dimethylallyl diphosphate</name>
        <dbReference type="ChEBI" id="CHEBI:57623"/>
    </ligand>
</feature>
<feature type="binding site" evidence="1">
    <location>
        <position position="204"/>
    </location>
    <ligand>
        <name>substrate</name>
    </ligand>
</feature>
<feature type="binding site" evidence="1">
    <location>
        <position position="268"/>
    </location>
    <ligand>
        <name>dimethylallyl diphosphate</name>
        <dbReference type="ChEBI" id="CHEBI:57623"/>
    </ligand>
</feature>
<feature type="binding site" evidence="1">
    <location>
        <position position="270"/>
    </location>
    <ligand>
        <name>dimethylallyl diphosphate</name>
        <dbReference type="ChEBI" id="CHEBI:57623"/>
    </ligand>
</feature>
<feature type="binding site" evidence="1">
    <location>
        <position position="353"/>
    </location>
    <ligand>
        <name>dimethylallyl diphosphate</name>
        <dbReference type="ChEBI" id="CHEBI:57623"/>
    </ligand>
</feature>
<feature type="binding site" evidence="1">
    <location>
        <position position="416"/>
    </location>
    <ligand>
        <name>dimethylallyl diphosphate</name>
        <dbReference type="ChEBI" id="CHEBI:57623"/>
    </ligand>
</feature>
<feature type="binding site" evidence="1">
    <location>
        <position position="420"/>
    </location>
    <ligand>
        <name>dimethylallyl diphosphate</name>
        <dbReference type="ChEBI" id="CHEBI:57623"/>
    </ligand>
</feature>
<protein>
    <recommendedName>
        <fullName evidence="6">Roquefortine prenyltransferase roqD</fullName>
        <ecNumber evidence="2 3 4">2.5.1.-</ecNumber>
    </recommendedName>
    <alternativeName>
        <fullName evidence="8">Roquefortien/meleagrin synthesis protein D</fullName>
    </alternativeName>
</protein>
<proteinExistence type="evidence at protein level"/>
<comment type="function">
    <text evidence="2 3 4">Roquefortine prenyltransferase; part of the gene cluster that mediates the biosynthesis of the mycotoxins roquefortine C and meleagrin (PubMed:22118684, PubMed:23776469). The first stage is catalyzed by the dipeptide synthase roqA which condenses histidine and tryptophan to produce histidyltryptophanyldiketopiperazine (HTD) (PubMed:22118684, PubMed:23776469). HTD is then converted to roquefortine C through two possible pathways (PubMed:23776469). In the first pathway, prenyltransferase roqD transforms HTD to the intermediate roquefortine D, which is in turn converted to roquefortine C by the cytochrome P450 monooxygenase roqR (PubMed:23776469). In the second pathway, HTD is first converted to the intermediate dehydrohistidyltryptophanyldi-ketopiperazine (DHTD) by roqR which is then prenylated by roqD to form roquefortine C (PubMed:23776469). Roquefortine C can be further transformed to meleagrin via three more reactions including oxydation to glandicolin A by roqM, which is further reduced to glandicoline B by roqO (PubMed:23776469). Finally, glandicoline B is converted to meleagrin by the glandicoline B O-methyltransferase roqN (PubMed:22118684, PubMed:23776469). More studies identified further branching and additional metabolites produced by the roquefortine/meleagrin cluster, including roquefortine F, roquefortine L, roquefortine M, roquefortine N and neoxaline (PubMed:24225953).</text>
</comment>
<comment type="pathway">
    <text evidence="2 3 4">Alkaloid biosynthesis.</text>
</comment>
<comment type="induction">
    <text evidence="3">Expression is decreased in presence of phenylacetic acid (PAA) (PubMed:23776469).</text>
</comment>
<comment type="disruption phenotype">
    <text evidence="2 3">Leads to a drastic reduction of both roquefortine C and meleagrin synthesis (PubMed:22118684). Accumulates high lebels of HTD (PubMed:23776469).</text>
</comment>
<comment type="biotechnology">
    <text evidence="5">The indole alkaloid meleagrin was shown to be a good candidate to control c-Met-dependent breast cancer proliferation, migration and invasion (PubMed:26692349).</text>
</comment>
<comment type="similarity">
    <text evidence="8">Belongs to the tryptophan dimethylallyltransferase family.</text>
</comment>
<reference key="1">
    <citation type="journal article" date="2008" name="Nat. Biotechnol.">
        <title>Genome sequencing and analysis of the filamentous fungus Penicillium chrysogenum.</title>
        <authorList>
            <person name="van den Berg M.A."/>
            <person name="Albang R."/>
            <person name="Albermann K."/>
            <person name="Badger J.H."/>
            <person name="Daran J.-M."/>
            <person name="Driessen A.J.M."/>
            <person name="Garcia-Estrada C."/>
            <person name="Fedorova N.D."/>
            <person name="Harris D.M."/>
            <person name="Heijne W.H.M."/>
            <person name="Joardar V.S."/>
            <person name="Kiel J.A.K.W."/>
            <person name="Kovalchuk A."/>
            <person name="Martin J.F."/>
            <person name="Nierman W.C."/>
            <person name="Nijland J.G."/>
            <person name="Pronk J.T."/>
            <person name="Roubos J.A."/>
            <person name="van der Klei I.J."/>
            <person name="van Peij N.N.M.E."/>
            <person name="Veenhuis M."/>
            <person name="von Doehren H."/>
            <person name="Wagner C."/>
            <person name="Wortman J.R."/>
            <person name="Bovenberg R.A.L."/>
        </authorList>
    </citation>
    <scope>NUCLEOTIDE SEQUENCE [LARGE SCALE GENOMIC DNA]</scope>
    <source>
        <strain>ATCC 28089 / DSM 1075 / NRRL 1951 / Wisconsin 54-1255</strain>
    </source>
</reference>
<reference key="2">
    <citation type="journal article" date="2011" name="Chem. Biol.">
        <title>A single cluster of coregulated genes encodes the biosynthesis of the mycotoxins roquefortine C and meleagrin in Penicillium chrysogenum.</title>
        <authorList>
            <person name="Garcia-Estrada C."/>
            <person name="Ullan R.V."/>
            <person name="Albillos S.M."/>
            <person name="Fernandez-Bodega M.A."/>
            <person name="Durek P."/>
            <person name="von Doehren H."/>
            <person name="Martin J.F."/>
        </authorList>
    </citation>
    <scope>FUNCTION</scope>
    <scope>DISRUPTION PHENOTYPE</scope>
</reference>
<reference key="3">
    <citation type="journal article" date="2013" name="J. Biol. Chem.">
        <title>Novel key metabolites reveal further branching of the roquefortine/meleagrin biosynthetic pathway.</title>
        <authorList>
            <person name="Ries M.I."/>
            <person name="Ali H."/>
            <person name="Lankhorst P.P."/>
            <person name="Hankemeier T."/>
            <person name="Bovenberg R.A."/>
            <person name="Driessen A.J."/>
            <person name="Vreeken R.J."/>
        </authorList>
    </citation>
    <scope>FUNCTION</scope>
    <scope>CATALYTIC ACTIVITY</scope>
</reference>
<reference key="4">
    <citation type="journal article" date="2013" name="PLoS ONE">
        <title>A branched biosynthetic pathway is involved in production of roquefortine and related compounds in Penicillium chrysogenum.</title>
        <authorList>
            <person name="Ali H."/>
            <person name="Ries M.I."/>
            <person name="Nijland J.G."/>
            <person name="Lankhorst P.P."/>
            <person name="Hankemeier T."/>
            <person name="Bovenberg R.A."/>
            <person name="Vreeken R.J."/>
            <person name="Driessen A.J."/>
        </authorList>
    </citation>
    <scope>FUNCTION</scope>
    <scope>CATALYTIC ACTIVITY</scope>
    <scope>INDUCTION</scope>
    <scope>DISRUPTION PHENOTYPE</scope>
</reference>
<reference key="5">
    <citation type="journal article" date="2016" name="Bioorg. Med. Chem.">
        <title>The indole alkaloid meleagrin, from the olive tree endophytic fungus Penicillium chrysogenum, as a novel lead for the control of c-Met-dependent breast cancer proliferation, migration and invasion.</title>
        <authorList>
            <person name="Mady M.S."/>
            <person name="Mohyeldin M.M."/>
            <person name="Ebrahim H.Y."/>
            <person name="Elsayed H.E."/>
            <person name="Houssen W.E."/>
            <person name="Haggag E.G."/>
            <person name="Soliman R.F."/>
            <person name="El Sayed K.A."/>
        </authorList>
    </citation>
    <scope>BIOTECHNOLOGY</scope>
</reference>
<sequence length="422" mass="47326">MTVSSTVQPLKACVPEATEAADMPHHTLSKSMTFANLDQYQYWHAVGPMLGRMLSNGSYSIHKQYEYLCLFAHVIIPKLGPFPGGRDIYKCLLGGTGSVELSQNVQKLGLTARVAFEPTSYIASTGVDPLNRHTVHATLVELRAIGSASIDMELHQMLVNELTLTDREERLMSPEAISGTAWKTQILLALDLGQTGITIKEYFYPALKASVTGQSVAKLCFSAIRKVDKQGRFEPASKAIETYMKTQSQTDLYFLSCDLVDPAATRIKLYLMELDMRLAKVEEHWTMGGKLNDEETLLGLKMLQELWVEFGIIEGMRNEPERPSLPGDPDTIVPFIMNYEMSPGEALPKPKFYFPLVGIPELKIANVLTAFFERYGMPEQAAVYRNNLQTPSKDLVIATDHQAWLSFSYTKKKGPYLTMYYH</sequence>
<evidence type="ECO:0000250" key="1">
    <source>
        <dbReference type="UniProtKB" id="Q4WAW7"/>
    </source>
</evidence>
<evidence type="ECO:0000269" key="2">
    <source>
    </source>
</evidence>
<evidence type="ECO:0000269" key="3">
    <source>
    </source>
</evidence>
<evidence type="ECO:0000269" key="4">
    <source>
    </source>
</evidence>
<evidence type="ECO:0000269" key="5">
    <source>
    </source>
</evidence>
<evidence type="ECO:0000303" key="6">
    <source>
    </source>
</evidence>
<evidence type="ECO:0000303" key="7">
    <source>
    </source>
</evidence>
<evidence type="ECO:0000305" key="8"/>
<keyword id="KW-0637">Prenyltransferase</keyword>
<keyword id="KW-1185">Reference proteome</keyword>
<keyword id="KW-0808">Transferase</keyword>
<dbReference type="EC" id="2.5.1.-" evidence="2 3 4"/>
<dbReference type="EMBL" id="AM920436">
    <property type="protein sequence ID" value="CAP96440.1"/>
    <property type="molecule type" value="Genomic_DNA"/>
</dbReference>
<dbReference type="RefSeq" id="XP_002568553.1">
    <property type="nucleotide sequence ID" value="XM_002568507.1"/>
</dbReference>
<dbReference type="SMR" id="B6HJU1"/>
<dbReference type="STRING" id="500485.B6HJU1"/>
<dbReference type="MEROPS" id="M77.003"/>
<dbReference type="VEuPathDB" id="FungiDB:PCH_Pc21g15430"/>
<dbReference type="eggNOG" id="ENOG502S2XP">
    <property type="taxonomic scope" value="Eukaryota"/>
</dbReference>
<dbReference type="HOGENOM" id="CLU_037431_0_0_1"/>
<dbReference type="OMA" id="EYFYPAL"/>
<dbReference type="OrthoDB" id="5392033at2759"/>
<dbReference type="BioCyc" id="PCHR:PC21G15430-MONOMER"/>
<dbReference type="Proteomes" id="UP000000724">
    <property type="component" value="Contig Pc00c21"/>
</dbReference>
<dbReference type="GO" id="GO:0004659">
    <property type="term" value="F:prenyltransferase activity"/>
    <property type="evidence" value="ECO:0007669"/>
    <property type="project" value="UniProtKB-KW"/>
</dbReference>
<dbReference type="GO" id="GO:0009820">
    <property type="term" value="P:alkaloid metabolic process"/>
    <property type="evidence" value="ECO:0007669"/>
    <property type="project" value="InterPro"/>
</dbReference>
<dbReference type="CDD" id="cd13929">
    <property type="entry name" value="PT-DMATS_CymD"/>
    <property type="match status" value="1"/>
</dbReference>
<dbReference type="InterPro" id="IPR033964">
    <property type="entry name" value="Aro_prenylTrfase"/>
</dbReference>
<dbReference type="InterPro" id="IPR017795">
    <property type="entry name" value="Aro_prenylTrfase_DMATS"/>
</dbReference>
<dbReference type="InterPro" id="IPR012148">
    <property type="entry name" value="DMATS-type_fun"/>
</dbReference>
<dbReference type="NCBIfam" id="TIGR03429">
    <property type="entry name" value="arom_pren_DMATS"/>
    <property type="match status" value="1"/>
</dbReference>
<dbReference type="PANTHER" id="PTHR40627">
    <property type="entry name" value="INDOLE PRENYLTRANSFERASE TDIB-RELATED"/>
    <property type="match status" value="1"/>
</dbReference>
<dbReference type="PANTHER" id="PTHR40627:SF3">
    <property type="entry name" value="PRENYLTRANSFERASE ASQH2-RELATED"/>
    <property type="match status" value="1"/>
</dbReference>
<dbReference type="Pfam" id="PF11991">
    <property type="entry name" value="Trp_DMAT"/>
    <property type="match status" value="1"/>
</dbReference>
<dbReference type="PIRSF" id="PIRSF000509">
    <property type="entry name" value="Trp_DMAT"/>
    <property type="match status" value="1"/>
</dbReference>
<dbReference type="SFLD" id="SFLDS00036">
    <property type="entry name" value="Aromatic_Prenyltransferase"/>
    <property type="match status" value="1"/>
</dbReference>
<dbReference type="SFLD" id="SFLDG01162">
    <property type="entry name" value="I"/>
    <property type="match status" value="1"/>
</dbReference>
<gene>
    <name evidence="7" type="primary">roqD</name>
    <name evidence="6" type="synonym">rpt</name>
    <name type="ORF">Pc21g15430</name>
</gene>